<keyword id="KW-0414">Isoprene biosynthesis</keyword>
<keyword id="KW-0456">Lyase</keyword>
<keyword id="KW-0479">Metal-binding</keyword>
<keyword id="KW-1185">Reference proteome</keyword>
<accession>Q81J62</accession>
<sequence length="158" mass="17219">MFRIGQGFDVHEFAEGRPLIIGGITIPHEKGLIGHSDADVLLHTIADACLGAIAAGDIGKHFPDTDPAFKDADSAVLLQKVWEFVREQGYELGNLDCTIIAQKPKMAPHIESMRKRISELLETSIDNINVKATTTEKLGFTGREEGIASQAVVLLQKK</sequence>
<dbReference type="EC" id="4.6.1.12" evidence="1"/>
<dbReference type="EMBL" id="AE016877">
    <property type="protein sequence ID" value="AAP07189.1"/>
    <property type="molecule type" value="Genomic_DNA"/>
</dbReference>
<dbReference type="RefSeq" id="NP_829988.1">
    <property type="nucleotide sequence ID" value="NC_004722.1"/>
</dbReference>
<dbReference type="RefSeq" id="WP_000488386.1">
    <property type="nucleotide sequence ID" value="NZ_CP138336.1"/>
</dbReference>
<dbReference type="SMR" id="Q81J62"/>
<dbReference type="STRING" id="226900.BC_0107"/>
<dbReference type="GeneID" id="93010967"/>
<dbReference type="KEGG" id="bce:BC0107"/>
<dbReference type="PATRIC" id="fig|226900.8.peg.109"/>
<dbReference type="HOGENOM" id="CLU_084630_2_0_9"/>
<dbReference type="OrthoDB" id="9804336at2"/>
<dbReference type="UniPathway" id="UPA00056">
    <property type="reaction ID" value="UER00095"/>
</dbReference>
<dbReference type="PRO" id="PR:Q81J62"/>
<dbReference type="Proteomes" id="UP000001417">
    <property type="component" value="Chromosome"/>
</dbReference>
<dbReference type="GO" id="GO:0008685">
    <property type="term" value="F:2-C-methyl-D-erythritol 2,4-cyclodiphosphate synthase activity"/>
    <property type="evidence" value="ECO:0000318"/>
    <property type="project" value="GO_Central"/>
</dbReference>
<dbReference type="GO" id="GO:0046872">
    <property type="term" value="F:metal ion binding"/>
    <property type="evidence" value="ECO:0007669"/>
    <property type="project" value="UniProtKB-KW"/>
</dbReference>
<dbReference type="GO" id="GO:0019288">
    <property type="term" value="P:isopentenyl diphosphate biosynthetic process, methylerythritol 4-phosphate pathway"/>
    <property type="evidence" value="ECO:0007669"/>
    <property type="project" value="UniProtKB-UniRule"/>
</dbReference>
<dbReference type="GO" id="GO:0016114">
    <property type="term" value="P:terpenoid biosynthetic process"/>
    <property type="evidence" value="ECO:0007669"/>
    <property type="project" value="InterPro"/>
</dbReference>
<dbReference type="CDD" id="cd00554">
    <property type="entry name" value="MECDP_synthase"/>
    <property type="match status" value="1"/>
</dbReference>
<dbReference type="FunFam" id="3.30.1330.50:FF:000001">
    <property type="entry name" value="2-C-methyl-D-erythritol 2,4-cyclodiphosphate synthase"/>
    <property type="match status" value="1"/>
</dbReference>
<dbReference type="Gene3D" id="3.30.1330.50">
    <property type="entry name" value="2-C-methyl-D-erythritol 2,4-cyclodiphosphate synthase"/>
    <property type="match status" value="1"/>
</dbReference>
<dbReference type="HAMAP" id="MF_00107">
    <property type="entry name" value="IspF"/>
    <property type="match status" value="1"/>
</dbReference>
<dbReference type="InterPro" id="IPR003526">
    <property type="entry name" value="MECDP_synthase"/>
</dbReference>
<dbReference type="InterPro" id="IPR020555">
    <property type="entry name" value="MECDP_synthase_CS"/>
</dbReference>
<dbReference type="InterPro" id="IPR036571">
    <property type="entry name" value="MECDP_synthase_sf"/>
</dbReference>
<dbReference type="NCBIfam" id="TIGR00151">
    <property type="entry name" value="ispF"/>
    <property type="match status" value="1"/>
</dbReference>
<dbReference type="PANTHER" id="PTHR43181">
    <property type="entry name" value="2-C-METHYL-D-ERYTHRITOL 2,4-CYCLODIPHOSPHATE SYNTHASE, CHLOROPLASTIC"/>
    <property type="match status" value="1"/>
</dbReference>
<dbReference type="PANTHER" id="PTHR43181:SF1">
    <property type="entry name" value="2-C-METHYL-D-ERYTHRITOL 2,4-CYCLODIPHOSPHATE SYNTHASE, CHLOROPLASTIC"/>
    <property type="match status" value="1"/>
</dbReference>
<dbReference type="Pfam" id="PF02542">
    <property type="entry name" value="YgbB"/>
    <property type="match status" value="1"/>
</dbReference>
<dbReference type="SUPFAM" id="SSF69765">
    <property type="entry name" value="IpsF-like"/>
    <property type="match status" value="1"/>
</dbReference>
<dbReference type="PROSITE" id="PS01350">
    <property type="entry name" value="ISPF"/>
    <property type="match status" value="1"/>
</dbReference>
<evidence type="ECO:0000255" key="1">
    <source>
        <dbReference type="HAMAP-Rule" id="MF_00107"/>
    </source>
</evidence>
<feature type="chain" id="PRO_0000189435" description="2-C-methyl-D-erythritol 2,4-cyclodiphosphate synthase">
    <location>
        <begin position="1"/>
        <end position="158"/>
    </location>
</feature>
<feature type="binding site" evidence="1">
    <location>
        <begin position="9"/>
        <end position="11"/>
    </location>
    <ligand>
        <name>4-CDP-2-C-methyl-D-erythritol 2-phosphate</name>
        <dbReference type="ChEBI" id="CHEBI:57919"/>
    </ligand>
</feature>
<feature type="binding site" evidence="1">
    <location>
        <position position="9"/>
    </location>
    <ligand>
        <name>a divalent metal cation</name>
        <dbReference type="ChEBI" id="CHEBI:60240"/>
    </ligand>
</feature>
<feature type="binding site" evidence="1">
    <location>
        <position position="11"/>
    </location>
    <ligand>
        <name>a divalent metal cation</name>
        <dbReference type="ChEBI" id="CHEBI:60240"/>
    </ligand>
</feature>
<feature type="binding site" evidence="1">
    <location>
        <begin position="35"/>
        <end position="36"/>
    </location>
    <ligand>
        <name>4-CDP-2-C-methyl-D-erythritol 2-phosphate</name>
        <dbReference type="ChEBI" id="CHEBI:57919"/>
    </ligand>
</feature>
<feature type="binding site" evidence="1">
    <location>
        <position position="43"/>
    </location>
    <ligand>
        <name>a divalent metal cation</name>
        <dbReference type="ChEBI" id="CHEBI:60240"/>
    </ligand>
</feature>
<feature type="binding site" evidence="1">
    <location>
        <begin position="57"/>
        <end position="59"/>
    </location>
    <ligand>
        <name>4-CDP-2-C-methyl-D-erythritol 2-phosphate</name>
        <dbReference type="ChEBI" id="CHEBI:57919"/>
    </ligand>
</feature>
<feature type="binding site" evidence="1">
    <location>
        <begin position="62"/>
        <end position="66"/>
    </location>
    <ligand>
        <name>4-CDP-2-C-methyl-D-erythritol 2-phosphate</name>
        <dbReference type="ChEBI" id="CHEBI:57919"/>
    </ligand>
</feature>
<feature type="binding site" evidence="1">
    <location>
        <begin position="101"/>
        <end position="107"/>
    </location>
    <ligand>
        <name>4-CDP-2-C-methyl-D-erythritol 2-phosphate</name>
        <dbReference type="ChEBI" id="CHEBI:57919"/>
    </ligand>
</feature>
<feature type="binding site" evidence="1">
    <location>
        <begin position="133"/>
        <end position="136"/>
    </location>
    <ligand>
        <name>4-CDP-2-C-methyl-D-erythritol 2-phosphate</name>
        <dbReference type="ChEBI" id="CHEBI:57919"/>
    </ligand>
</feature>
<feature type="binding site" evidence="1">
    <location>
        <position position="140"/>
    </location>
    <ligand>
        <name>4-CDP-2-C-methyl-D-erythritol 2-phosphate</name>
        <dbReference type="ChEBI" id="CHEBI:57919"/>
    </ligand>
</feature>
<feature type="binding site" evidence="1">
    <location>
        <position position="143"/>
    </location>
    <ligand>
        <name>4-CDP-2-C-methyl-D-erythritol 2-phosphate</name>
        <dbReference type="ChEBI" id="CHEBI:57919"/>
    </ligand>
</feature>
<feature type="site" description="Transition state stabilizer" evidence="1">
    <location>
        <position position="35"/>
    </location>
</feature>
<feature type="site" description="Transition state stabilizer" evidence="1">
    <location>
        <position position="134"/>
    </location>
</feature>
<proteinExistence type="inferred from homology"/>
<reference key="1">
    <citation type="journal article" date="2003" name="Nature">
        <title>Genome sequence of Bacillus cereus and comparative analysis with Bacillus anthracis.</title>
        <authorList>
            <person name="Ivanova N."/>
            <person name="Sorokin A."/>
            <person name="Anderson I."/>
            <person name="Galleron N."/>
            <person name="Candelon B."/>
            <person name="Kapatral V."/>
            <person name="Bhattacharyya A."/>
            <person name="Reznik G."/>
            <person name="Mikhailova N."/>
            <person name="Lapidus A."/>
            <person name="Chu L."/>
            <person name="Mazur M."/>
            <person name="Goltsman E."/>
            <person name="Larsen N."/>
            <person name="D'Souza M."/>
            <person name="Walunas T."/>
            <person name="Grechkin Y."/>
            <person name="Pusch G."/>
            <person name="Haselkorn R."/>
            <person name="Fonstein M."/>
            <person name="Ehrlich S.D."/>
            <person name="Overbeek R."/>
            <person name="Kyrpides N.C."/>
        </authorList>
    </citation>
    <scope>NUCLEOTIDE SEQUENCE [LARGE SCALE GENOMIC DNA]</scope>
    <source>
        <strain>ATCC 14579 / DSM 31 / CCUG 7414 / JCM 2152 / NBRC 15305 / NCIMB 9373 / NCTC 2599 / NRRL B-3711</strain>
    </source>
</reference>
<comment type="function">
    <text evidence="1">Involved in the biosynthesis of isopentenyl diphosphate (IPP) and dimethylallyl diphosphate (DMAPP), two major building blocks of isoprenoid compounds. Catalyzes the conversion of 4-diphosphocytidyl-2-C-methyl-D-erythritol 2-phosphate (CDP-ME2P) to 2-C-methyl-D-erythritol 2,4-cyclodiphosphate (ME-CPP) with a corresponding release of cytidine 5-monophosphate (CMP).</text>
</comment>
<comment type="catalytic activity">
    <reaction evidence="1">
        <text>4-CDP-2-C-methyl-D-erythritol 2-phosphate = 2-C-methyl-D-erythritol 2,4-cyclic diphosphate + CMP</text>
        <dbReference type="Rhea" id="RHEA:23864"/>
        <dbReference type="ChEBI" id="CHEBI:57919"/>
        <dbReference type="ChEBI" id="CHEBI:58483"/>
        <dbReference type="ChEBI" id="CHEBI:60377"/>
        <dbReference type="EC" id="4.6.1.12"/>
    </reaction>
</comment>
<comment type="cofactor">
    <cofactor evidence="1">
        <name>a divalent metal cation</name>
        <dbReference type="ChEBI" id="CHEBI:60240"/>
    </cofactor>
    <text evidence="1">Binds 1 divalent metal cation per subunit.</text>
</comment>
<comment type="pathway">
    <text evidence="1">Isoprenoid biosynthesis; isopentenyl diphosphate biosynthesis via DXP pathway; isopentenyl diphosphate from 1-deoxy-D-xylulose 5-phosphate: step 4/6.</text>
</comment>
<comment type="subunit">
    <text evidence="1">Homotrimer.</text>
</comment>
<comment type="similarity">
    <text evidence="1">Belongs to the IspF family.</text>
</comment>
<gene>
    <name evidence="1" type="primary">ispF</name>
    <name type="ordered locus">BC_0107</name>
</gene>
<organism>
    <name type="scientific">Bacillus cereus (strain ATCC 14579 / DSM 31 / CCUG 7414 / JCM 2152 / NBRC 15305 / NCIMB 9373 / NCTC 2599 / NRRL B-3711)</name>
    <dbReference type="NCBI Taxonomy" id="226900"/>
    <lineage>
        <taxon>Bacteria</taxon>
        <taxon>Bacillati</taxon>
        <taxon>Bacillota</taxon>
        <taxon>Bacilli</taxon>
        <taxon>Bacillales</taxon>
        <taxon>Bacillaceae</taxon>
        <taxon>Bacillus</taxon>
        <taxon>Bacillus cereus group</taxon>
    </lineage>
</organism>
<protein>
    <recommendedName>
        <fullName evidence="1">2-C-methyl-D-erythritol 2,4-cyclodiphosphate synthase</fullName>
        <shortName evidence="1">MECDP-synthase</shortName>
        <shortName evidence="1">MECPP-synthase</shortName>
        <shortName evidence="1">MECPS</shortName>
        <ecNumber evidence="1">4.6.1.12</ecNumber>
    </recommendedName>
</protein>
<name>ISPF_BACCR</name>